<accession>P48847</accession>
<accession>B2J6J7</accession>
<sequence length="349" mass="38618">MAKTPESLESSINEITDRALDRDCTTLSRHVLQQLQSFSPDAQDLSALMNRIALAGKLVARRMSRAGLMEGVLGFTGEVNVQGESVKKMDVYANDVFISVFKQSGLVCRLASEEMENPYYIPENCPIGRYTLLYDPIDGSSNTDNNLSLGSIFAIRQQEGTDSDGKATDLLANGRKQLAAGYILYGPCTMLVYTIGKGVHSFVLDPSLGEFILTEENIRIPNHGSVYSVNEGNFWQWEESIREYIRYVHRTEGYSARYSGAMVSDIHRILVQGGVFLYPGTIQNPEGKLRLLYETAPLAFLIEQAGGRATTGLVNILDVVPKKLHQRTPLIIGSKEDVAKVESFIQNGH</sequence>
<organism>
    <name type="scientific">Nostoc punctiforme (strain ATCC 29133 / PCC 73102)</name>
    <dbReference type="NCBI Taxonomy" id="63737"/>
    <lineage>
        <taxon>Bacteria</taxon>
        <taxon>Bacillati</taxon>
        <taxon>Cyanobacteriota</taxon>
        <taxon>Cyanophyceae</taxon>
        <taxon>Nostocales</taxon>
        <taxon>Nostocaceae</taxon>
        <taxon>Nostoc</taxon>
    </lineage>
</organism>
<gene>
    <name evidence="1" type="primary">fbp</name>
    <name type="ordered locus">Npun_F4023</name>
</gene>
<comment type="catalytic activity">
    <reaction evidence="1">
        <text>beta-D-fructose 1,6-bisphosphate + H2O = beta-D-fructose 6-phosphate + phosphate</text>
        <dbReference type="Rhea" id="RHEA:11064"/>
        <dbReference type="ChEBI" id="CHEBI:15377"/>
        <dbReference type="ChEBI" id="CHEBI:32966"/>
        <dbReference type="ChEBI" id="CHEBI:43474"/>
        <dbReference type="ChEBI" id="CHEBI:57634"/>
        <dbReference type="EC" id="3.1.3.11"/>
    </reaction>
</comment>
<comment type="cofactor">
    <cofactor evidence="1">
        <name>Mg(2+)</name>
        <dbReference type="ChEBI" id="CHEBI:18420"/>
    </cofactor>
    <text evidence="1">Binds 2 magnesium ions per subunit.</text>
</comment>
<comment type="pathway">
    <text evidence="1">Carbohydrate biosynthesis; Calvin cycle.</text>
</comment>
<comment type="subunit">
    <text evidence="1">Homotetramer.</text>
</comment>
<comment type="subcellular location">
    <subcellularLocation>
        <location evidence="1">Cytoplasm</location>
    </subcellularLocation>
</comment>
<comment type="similarity">
    <text evidence="1">Belongs to the FBPase class 1 family.</text>
</comment>
<dbReference type="EC" id="3.1.3.11" evidence="1"/>
<dbReference type="EMBL" id="L32796">
    <property type="protein sequence ID" value="AAA50768.1"/>
    <property type="molecule type" value="Genomic_DNA"/>
</dbReference>
<dbReference type="EMBL" id="CP001037">
    <property type="protein sequence ID" value="ACC82402.1"/>
    <property type="molecule type" value="Genomic_DNA"/>
</dbReference>
<dbReference type="RefSeq" id="WP_012410369.1">
    <property type="nucleotide sequence ID" value="NC_010628.1"/>
</dbReference>
<dbReference type="SMR" id="P48847"/>
<dbReference type="STRING" id="63737.Npun_F4023"/>
<dbReference type="EnsemblBacteria" id="ACC82402">
    <property type="protein sequence ID" value="ACC82402"/>
    <property type="gene ID" value="Npun_F4023"/>
</dbReference>
<dbReference type="KEGG" id="npu:Npun_F4023"/>
<dbReference type="eggNOG" id="COG0158">
    <property type="taxonomic scope" value="Bacteria"/>
</dbReference>
<dbReference type="HOGENOM" id="CLU_039977_2_2_3"/>
<dbReference type="OrthoDB" id="9806756at2"/>
<dbReference type="PhylomeDB" id="P48847"/>
<dbReference type="UniPathway" id="UPA00116"/>
<dbReference type="Proteomes" id="UP000001191">
    <property type="component" value="Chromosome"/>
</dbReference>
<dbReference type="GO" id="GO:0005829">
    <property type="term" value="C:cytosol"/>
    <property type="evidence" value="ECO:0007669"/>
    <property type="project" value="TreeGrafter"/>
</dbReference>
<dbReference type="GO" id="GO:0042132">
    <property type="term" value="F:fructose 1,6-bisphosphate 1-phosphatase activity"/>
    <property type="evidence" value="ECO:0007669"/>
    <property type="project" value="UniProtKB-UniRule"/>
</dbReference>
<dbReference type="GO" id="GO:0000287">
    <property type="term" value="F:magnesium ion binding"/>
    <property type="evidence" value="ECO:0007669"/>
    <property type="project" value="UniProtKB-UniRule"/>
</dbReference>
<dbReference type="GO" id="GO:0030388">
    <property type="term" value="P:fructose 1,6-bisphosphate metabolic process"/>
    <property type="evidence" value="ECO:0007669"/>
    <property type="project" value="TreeGrafter"/>
</dbReference>
<dbReference type="GO" id="GO:0006002">
    <property type="term" value="P:fructose 6-phosphate metabolic process"/>
    <property type="evidence" value="ECO:0007669"/>
    <property type="project" value="TreeGrafter"/>
</dbReference>
<dbReference type="GO" id="GO:0006000">
    <property type="term" value="P:fructose metabolic process"/>
    <property type="evidence" value="ECO:0007669"/>
    <property type="project" value="TreeGrafter"/>
</dbReference>
<dbReference type="GO" id="GO:0006094">
    <property type="term" value="P:gluconeogenesis"/>
    <property type="evidence" value="ECO:0007669"/>
    <property type="project" value="UniProtKB-UniRule"/>
</dbReference>
<dbReference type="GO" id="GO:0019253">
    <property type="term" value="P:reductive pentose-phosphate cycle"/>
    <property type="evidence" value="ECO:0007669"/>
    <property type="project" value="UniProtKB-UniRule"/>
</dbReference>
<dbReference type="GO" id="GO:0005986">
    <property type="term" value="P:sucrose biosynthetic process"/>
    <property type="evidence" value="ECO:0007669"/>
    <property type="project" value="TreeGrafter"/>
</dbReference>
<dbReference type="CDD" id="cd00354">
    <property type="entry name" value="FBPase"/>
    <property type="match status" value="1"/>
</dbReference>
<dbReference type="FunFam" id="3.30.540.10:FF:000002">
    <property type="entry name" value="Fructose-1,6-bisphosphatase class 1"/>
    <property type="match status" value="1"/>
</dbReference>
<dbReference type="FunFam" id="3.40.190.80:FF:000001">
    <property type="entry name" value="Fructose-1,6-bisphosphatase class 1"/>
    <property type="match status" value="1"/>
</dbReference>
<dbReference type="Gene3D" id="3.40.190.80">
    <property type="match status" value="1"/>
</dbReference>
<dbReference type="Gene3D" id="3.30.540.10">
    <property type="entry name" value="Fructose-1,6-Bisphosphatase, subunit A, domain 1"/>
    <property type="match status" value="1"/>
</dbReference>
<dbReference type="HAMAP" id="MF_01855">
    <property type="entry name" value="FBPase_class1"/>
    <property type="match status" value="1"/>
</dbReference>
<dbReference type="InterPro" id="IPR044015">
    <property type="entry name" value="FBPase_C_dom"/>
</dbReference>
<dbReference type="InterPro" id="IPR000146">
    <property type="entry name" value="FBPase_class-1"/>
</dbReference>
<dbReference type="InterPro" id="IPR033391">
    <property type="entry name" value="FBPase_N"/>
</dbReference>
<dbReference type="InterPro" id="IPR028343">
    <property type="entry name" value="FBPtase"/>
</dbReference>
<dbReference type="InterPro" id="IPR020548">
    <property type="entry name" value="Fructose_bisphosphatase_AS"/>
</dbReference>
<dbReference type="NCBIfam" id="NF006778">
    <property type="entry name" value="PRK09293.1-1"/>
    <property type="match status" value="1"/>
</dbReference>
<dbReference type="PANTHER" id="PTHR11556">
    <property type="entry name" value="FRUCTOSE-1,6-BISPHOSPHATASE-RELATED"/>
    <property type="match status" value="1"/>
</dbReference>
<dbReference type="PANTHER" id="PTHR11556:SF35">
    <property type="entry name" value="SEDOHEPTULOSE-1,7-BISPHOSPHATASE, CHLOROPLASTIC"/>
    <property type="match status" value="1"/>
</dbReference>
<dbReference type="Pfam" id="PF00316">
    <property type="entry name" value="FBPase"/>
    <property type="match status" value="1"/>
</dbReference>
<dbReference type="Pfam" id="PF18913">
    <property type="entry name" value="FBPase_C"/>
    <property type="match status" value="1"/>
</dbReference>
<dbReference type="PIRSF" id="PIRSF500210">
    <property type="entry name" value="FBPtase"/>
    <property type="match status" value="1"/>
</dbReference>
<dbReference type="PIRSF" id="PIRSF000904">
    <property type="entry name" value="FBPtase_SBPase"/>
    <property type="match status" value="1"/>
</dbReference>
<dbReference type="PRINTS" id="PR00115">
    <property type="entry name" value="F16BPHPHTASE"/>
</dbReference>
<dbReference type="SUPFAM" id="SSF56655">
    <property type="entry name" value="Carbohydrate phosphatase"/>
    <property type="match status" value="1"/>
</dbReference>
<dbReference type="PROSITE" id="PS00124">
    <property type="entry name" value="FBPASE"/>
    <property type="match status" value="1"/>
</dbReference>
<proteinExistence type="inferred from homology"/>
<reference key="1">
    <citation type="journal article" date="1995" name="Plant Physiol.">
        <title>Nucleotide sequence of an operon in Nostoc sp. strain ATCC 29133 encoding four genes of the oxidative pentose phosphate cycle.</title>
        <authorList>
            <person name="Summers M.L."/>
            <person name="Meeks J.C."/>
            <person name="Chu S."/>
            <person name="Wolf R.E. Jr."/>
        </authorList>
    </citation>
    <scope>NUCLEOTIDE SEQUENCE [GENOMIC DNA]</scope>
</reference>
<reference key="2">
    <citation type="journal article" date="2013" name="Plant Physiol.">
        <title>A Nostoc punctiforme Sugar Transporter Necessary to Establish a Cyanobacterium-Plant Symbiosis.</title>
        <authorList>
            <person name="Ekman M."/>
            <person name="Picossi S."/>
            <person name="Campbell E.L."/>
            <person name="Meeks J.C."/>
            <person name="Flores E."/>
        </authorList>
    </citation>
    <scope>NUCLEOTIDE SEQUENCE [LARGE SCALE GENOMIC DNA]</scope>
    <source>
        <strain>ATCC 29133 / PCC 73102</strain>
    </source>
</reference>
<protein>
    <recommendedName>
        <fullName evidence="1">Fructose-1,6-bisphosphatase class 1</fullName>
        <shortName evidence="1">FBPase class 1</shortName>
        <ecNumber evidence="1">3.1.3.11</ecNumber>
    </recommendedName>
    <alternativeName>
        <fullName evidence="1">D-fructose-1,6-bisphosphate 1-phosphohydrolase class 1</fullName>
    </alternativeName>
</protein>
<evidence type="ECO:0000255" key="1">
    <source>
        <dbReference type="HAMAP-Rule" id="MF_01855"/>
    </source>
</evidence>
<keyword id="KW-0113">Calvin cycle</keyword>
<keyword id="KW-0119">Carbohydrate metabolism</keyword>
<keyword id="KW-0963">Cytoplasm</keyword>
<keyword id="KW-0378">Hydrolase</keyword>
<keyword id="KW-0460">Magnesium</keyword>
<keyword id="KW-0479">Metal-binding</keyword>
<keyword id="KW-1185">Reference proteome</keyword>
<name>F16PA_NOSP7</name>
<feature type="chain" id="PRO_0000200483" description="Fructose-1,6-bisphosphatase class 1">
    <location>
        <begin position="1"/>
        <end position="349"/>
    </location>
</feature>
<feature type="binding site" evidence="1">
    <location>
        <position position="113"/>
    </location>
    <ligand>
        <name>Mg(2+)</name>
        <dbReference type="ChEBI" id="CHEBI:18420"/>
        <label>1</label>
    </ligand>
</feature>
<feature type="binding site" evidence="1">
    <location>
        <position position="135"/>
    </location>
    <ligand>
        <name>Mg(2+)</name>
        <dbReference type="ChEBI" id="CHEBI:18420"/>
        <label>1</label>
    </ligand>
</feature>
<feature type="binding site" evidence="1">
    <location>
        <position position="135"/>
    </location>
    <ligand>
        <name>Mg(2+)</name>
        <dbReference type="ChEBI" id="CHEBI:18420"/>
        <label>2</label>
    </ligand>
</feature>
<feature type="binding site" evidence="1">
    <location>
        <position position="137"/>
    </location>
    <ligand>
        <name>Mg(2+)</name>
        <dbReference type="ChEBI" id="CHEBI:18420"/>
        <label>1</label>
    </ligand>
</feature>
<feature type="binding site" evidence="1">
    <location>
        <begin position="138"/>
        <end position="141"/>
    </location>
    <ligand>
        <name>substrate</name>
    </ligand>
</feature>
<feature type="binding site" evidence="1">
    <location>
        <position position="138"/>
    </location>
    <ligand>
        <name>Mg(2+)</name>
        <dbReference type="ChEBI" id="CHEBI:18420"/>
        <label>2</label>
    </ligand>
</feature>
<feature type="binding site" evidence="1">
    <location>
        <position position="230"/>
    </location>
    <ligand>
        <name>substrate</name>
    </ligand>
</feature>
<feature type="binding site" evidence="1">
    <location>
        <position position="258"/>
    </location>
    <ligand>
        <name>substrate</name>
    </ligand>
</feature>
<feature type="binding site" evidence="1">
    <location>
        <position position="288"/>
    </location>
    <ligand>
        <name>substrate</name>
    </ligand>
</feature>
<feature type="binding site" evidence="1">
    <location>
        <position position="294"/>
    </location>
    <ligand>
        <name>Mg(2+)</name>
        <dbReference type="ChEBI" id="CHEBI:18420"/>
        <label>2</label>
    </ligand>
</feature>